<comment type="function">
    <text evidence="1">Involved in the biosynthesis of isopentenyl diphosphate (IPP) and dimethylallyl diphosphate (DMAPP), two major building blocks of isoprenoid compounds. Catalyzes the conversion of 4-diphosphocytidyl-2-C-methyl-D-erythritol 2-phosphate (CDP-ME2P) to 2-C-methyl-D-erythritol 2,4-cyclodiphosphate (ME-CPP) with a corresponding release of cytidine 5-monophosphate (CMP).</text>
</comment>
<comment type="catalytic activity">
    <reaction evidence="1">
        <text>4-CDP-2-C-methyl-D-erythritol 2-phosphate = 2-C-methyl-D-erythritol 2,4-cyclic diphosphate + CMP</text>
        <dbReference type="Rhea" id="RHEA:23864"/>
        <dbReference type="ChEBI" id="CHEBI:57919"/>
        <dbReference type="ChEBI" id="CHEBI:58483"/>
        <dbReference type="ChEBI" id="CHEBI:60377"/>
        <dbReference type="EC" id="4.6.1.12"/>
    </reaction>
</comment>
<comment type="cofactor">
    <cofactor evidence="1">
        <name>a divalent metal cation</name>
        <dbReference type="ChEBI" id="CHEBI:60240"/>
    </cofactor>
    <text evidence="1">Binds 1 divalent metal cation per subunit.</text>
</comment>
<comment type="pathway">
    <text evidence="1">Isoprenoid biosynthesis; isopentenyl diphosphate biosynthesis via DXP pathway; isopentenyl diphosphate from 1-deoxy-D-xylulose 5-phosphate: step 4/6.</text>
</comment>
<comment type="subunit">
    <text evidence="1">Homotrimer.</text>
</comment>
<comment type="similarity">
    <text evidence="1">Belongs to the IspF family.</text>
</comment>
<dbReference type="EC" id="4.6.1.12" evidence="1"/>
<dbReference type="EMBL" id="CP000082">
    <property type="protein sequence ID" value="AAZ19093.1"/>
    <property type="molecule type" value="Genomic_DNA"/>
</dbReference>
<dbReference type="RefSeq" id="WP_011280515.1">
    <property type="nucleotide sequence ID" value="NC_007204.1"/>
</dbReference>
<dbReference type="SMR" id="Q4FSB5"/>
<dbReference type="STRING" id="259536.Psyc_1243"/>
<dbReference type="KEGG" id="par:Psyc_1243"/>
<dbReference type="eggNOG" id="COG0245">
    <property type="taxonomic scope" value="Bacteria"/>
</dbReference>
<dbReference type="HOGENOM" id="CLU_084630_2_0_6"/>
<dbReference type="OrthoDB" id="9804336at2"/>
<dbReference type="UniPathway" id="UPA00056">
    <property type="reaction ID" value="UER00095"/>
</dbReference>
<dbReference type="Proteomes" id="UP000000546">
    <property type="component" value="Chromosome"/>
</dbReference>
<dbReference type="GO" id="GO:0008685">
    <property type="term" value="F:2-C-methyl-D-erythritol 2,4-cyclodiphosphate synthase activity"/>
    <property type="evidence" value="ECO:0007669"/>
    <property type="project" value="UniProtKB-UniRule"/>
</dbReference>
<dbReference type="GO" id="GO:0046872">
    <property type="term" value="F:metal ion binding"/>
    <property type="evidence" value="ECO:0007669"/>
    <property type="project" value="UniProtKB-KW"/>
</dbReference>
<dbReference type="GO" id="GO:0019288">
    <property type="term" value="P:isopentenyl diphosphate biosynthetic process, methylerythritol 4-phosphate pathway"/>
    <property type="evidence" value="ECO:0007669"/>
    <property type="project" value="UniProtKB-UniRule"/>
</dbReference>
<dbReference type="GO" id="GO:0016114">
    <property type="term" value="P:terpenoid biosynthetic process"/>
    <property type="evidence" value="ECO:0007669"/>
    <property type="project" value="InterPro"/>
</dbReference>
<dbReference type="CDD" id="cd00554">
    <property type="entry name" value="MECDP_synthase"/>
    <property type="match status" value="1"/>
</dbReference>
<dbReference type="Gene3D" id="3.30.1330.50">
    <property type="entry name" value="2-C-methyl-D-erythritol 2,4-cyclodiphosphate synthase"/>
    <property type="match status" value="1"/>
</dbReference>
<dbReference type="HAMAP" id="MF_00107">
    <property type="entry name" value="IspF"/>
    <property type="match status" value="1"/>
</dbReference>
<dbReference type="InterPro" id="IPR003526">
    <property type="entry name" value="MECDP_synthase"/>
</dbReference>
<dbReference type="InterPro" id="IPR020555">
    <property type="entry name" value="MECDP_synthase_CS"/>
</dbReference>
<dbReference type="InterPro" id="IPR036571">
    <property type="entry name" value="MECDP_synthase_sf"/>
</dbReference>
<dbReference type="NCBIfam" id="TIGR00151">
    <property type="entry name" value="ispF"/>
    <property type="match status" value="1"/>
</dbReference>
<dbReference type="PANTHER" id="PTHR43181">
    <property type="entry name" value="2-C-METHYL-D-ERYTHRITOL 2,4-CYCLODIPHOSPHATE SYNTHASE, CHLOROPLASTIC"/>
    <property type="match status" value="1"/>
</dbReference>
<dbReference type="PANTHER" id="PTHR43181:SF1">
    <property type="entry name" value="2-C-METHYL-D-ERYTHRITOL 2,4-CYCLODIPHOSPHATE SYNTHASE, CHLOROPLASTIC"/>
    <property type="match status" value="1"/>
</dbReference>
<dbReference type="Pfam" id="PF02542">
    <property type="entry name" value="YgbB"/>
    <property type="match status" value="1"/>
</dbReference>
<dbReference type="SUPFAM" id="SSF69765">
    <property type="entry name" value="IpsF-like"/>
    <property type="match status" value="1"/>
</dbReference>
<dbReference type="PROSITE" id="PS01350">
    <property type="entry name" value="ISPF"/>
    <property type="match status" value="1"/>
</dbReference>
<reference key="1">
    <citation type="journal article" date="2010" name="Appl. Environ. Microbiol.">
        <title>The genome sequence of Psychrobacter arcticus 273-4, a psychroactive Siberian permafrost bacterium, reveals mechanisms for adaptation to low-temperature growth.</title>
        <authorList>
            <person name="Ayala-del-Rio H.L."/>
            <person name="Chain P.S."/>
            <person name="Grzymski J.J."/>
            <person name="Ponder M.A."/>
            <person name="Ivanova N."/>
            <person name="Bergholz P.W."/>
            <person name="Di Bartolo G."/>
            <person name="Hauser L."/>
            <person name="Land M."/>
            <person name="Bakermans C."/>
            <person name="Rodrigues D."/>
            <person name="Klappenbach J."/>
            <person name="Zarka D."/>
            <person name="Larimer F."/>
            <person name="Richardson P."/>
            <person name="Murray A."/>
            <person name="Thomashow M."/>
            <person name="Tiedje J.M."/>
        </authorList>
    </citation>
    <scope>NUCLEOTIDE SEQUENCE [LARGE SCALE GENOMIC DNA]</scope>
    <source>
        <strain>DSM 17307 / VKM B-2377 / 273-4</strain>
    </source>
</reference>
<feature type="chain" id="PRO_0000237746" description="2-C-methyl-D-erythritol 2,4-cyclodiphosphate synthase">
    <location>
        <begin position="1"/>
        <end position="168"/>
    </location>
</feature>
<feature type="binding site" evidence="1">
    <location>
        <begin position="11"/>
        <end position="13"/>
    </location>
    <ligand>
        <name>4-CDP-2-C-methyl-D-erythritol 2-phosphate</name>
        <dbReference type="ChEBI" id="CHEBI:57919"/>
    </ligand>
</feature>
<feature type="binding site" evidence="1">
    <location>
        <position position="11"/>
    </location>
    <ligand>
        <name>a divalent metal cation</name>
        <dbReference type="ChEBI" id="CHEBI:60240"/>
    </ligand>
</feature>
<feature type="binding site" evidence="1">
    <location>
        <position position="13"/>
    </location>
    <ligand>
        <name>a divalent metal cation</name>
        <dbReference type="ChEBI" id="CHEBI:60240"/>
    </ligand>
</feature>
<feature type="binding site" evidence="1">
    <location>
        <begin position="41"/>
        <end position="42"/>
    </location>
    <ligand>
        <name>4-CDP-2-C-methyl-D-erythritol 2-phosphate</name>
        <dbReference type="ChEBI" id="CHEBI:57919"/>
    </ligand>
</feature>
<feature type="binding site" evidence="1">
    <location>
        <position position="49"/>
    </location>
    <ligand>
        <name>a divalent metal cation</name>
        <dbReference type="ChEBI" id="CHEBI:60240"/>
    </ligand>
</feature>
<feature type="binding site" evidence="1">
    <location>
        <begin position="63"/>
        <end position="65"/>
    </location>
    <ligand>
        <name>4-CDP-2-C-methyl-D-erythritol 2-phosphate</name>
        <dbReference type="ChEBI" id="CHEBI:57919"/>
    </ligand>
</feature>
<feature type="binding site" evidence="1">
    <location>
        <begin position="68"/>
        <end position="72"/>
    </location>
    <ligand>
        <name>4-CDP-2-C-methyl-D-erythritol 2-phosphate</name>
        <dbReference type="ChEBI" id="CHEBI:57919"/>
    </ligand>
</feature>
<feature type="binding site" evidence="1">
    <location>
        <begin position="139"/>
        <end position="142"/>
    </location>
    <ligand>
        <name>4-CDP-2-C-methyl-D-erythritol 2-phosphate</name>
        <dbReference type="ChEBI" id="CHEBI:57919"/>
    </ligand>
</feature>
<feature type="binding site" evidence="1">
    <location>
        <position position="146"/>
    </location>
    <ligand>
        <name>4-CDP-2-C-methyl-D-erythritol 2-phosphate</name>
        <dbReference type="ChEBI" id="CHEBI:57919"/>
    </ligand>
</feature>
<feature type="binding site" evidence="1">
    <location>
        <position position="149"/>
    </location>
    <ligand>
        <name>4-CDP-2-C-methyl-D-erythritol 2-phosphate</name>
        <dbReference type="ChEBI" id="CHEBI:57919"/>
    </ligand>
</feature>
<feature type="site" description="Transition state stabilizer" evidence="1">
    <location>
        <position position="41"/>
    </location>
</feature>
<feature type="site" description="Transition state stabilizer" evidence="1">
    <location>
        <position position="140"/>
    </location>
</feature>
<organism>
    <name type="scientific">Psychrobacter arcticus (strain DSM 17307 / VKM B-2377 / 273-4)</name>
    <dbReference type="NCBI Taxonomy" id="259536"/>
    <lineage>
        <taxon>Bacteria</taxon>
        <taxon>Pseudomonadati</taxon>
        <taxon>Pseudomonadota</taxon>
        <taxon>Gammaproteobacteria</taxon>
        <taxon>Moraxellales</taxon>
        <taxon>Moraxellaceae</taxon>
        <taxon>Psychrobacter</taxon>
    </lineage>
</organism>
<protein>
    <recommendedName>
        <fullName evidence="1">2-C-methyl-D-erythritol 2,4-cyclodiphosphate synthase</fullName>
        <shortName evidence="1">MECDP-synthase</shortName>
        <shortName evidence="1">MECPP-synthase</shortName>
        <shortName evidence="1">MECPS</shortName>
        <ecNumber evidence="1">4.6.1.12</ecNumber>
    </recommendedName>
</protein>
<gene>
    <name evidence="1" type="primary">ispF</name>
    <name type="ordered locus">Psyc_1243</name>
</gene>
<keyword id="KW-0414">Isoprene biosynthesis</keyword>
<keyword id="KW-0456">Lyase</keyword>
<keyword id="KW-0479">Metal-binding</keyword>
<keyword id="KW-1185">Reference proteome</keyword>
<name>ISPF_PSYA2</name>
<sequence length="168" mass="17749">MIMIKIGQGIDVHAFHNNGQQQQYVVLAGVPIEHTHSLLAHSDGDVVLHALADALLGALALGDIGQHFPDTDAANAGLDSRVLLRYVYGKVLAAGYMLGNADITVMCERPKLAVHNLAMRANIASDLQTDVSNISVKATTTEKLGFTGRQEGIMANAVVLLVPNTSGV</sequence>
<evidence type="ECO:0000255" key="1">
    <source>
        <dbReference type="HAMAP-Rule" id="MF_00107"/>
    </source>
</evidence>
<proteinExistence type="inferred from homology"/>
<accession>Q4FSB5</accession>